<organism>
    <name type="scientific">Streptococcus pyogenes serotype M4 (strain MGAS10750)</name>
    <dbReference type="NCBI Taxonomy" id="370554"/>
    <lineage>
        <taxon>Bacteria</taxon>
        <taxon>Bacillati</taxon>
        <taxon>Bacillota</taxon>
        <taxon>Bacilli</taxon>
        <taxon>Lactobacillales</taxon>
        <taxon>Streptococcaceae</taxon>
        <taxon>Streptococcus</taxon>
    </lineage>
</organism>
<comment type="function">
    <text evidence="1">Produces ATP from ADP in the presence of a proton gradient across the membrane. The V-type alpha chain is a catalytic subunit.</text>
</comment>
<comment type="catalytic activity">
    <reaction evidence="1">
        <text>ATP + H2O + 4 H(+)(in) = ADP + phosphate + 5 H(+)(out)</text>
        <dbReference type="Rhea" id="RHEA:57720"/>
        <dbReference type="ChEBI" id="CHEBI:15377"/>
        <dbReference type="ChEBI" id="CHEBI:15378"/>
        <dbReference type="ChEBI" id="CHEBI:30616"/>
        <dbReference type="ChEBI" id="CHEBI:43474"/>
        <dbReference type="ChEBI" id="CHEBI:456216"/>
        <dbReference type="EC" id="7.1.2.2"/>
    </reaction>
</comment>
<comment type="similarity">
    <text evidence="1">Belongs to the ATPase alpha/beta chains family.</text>
</comment>
<accession>Q1J8S5</accession>
<evidence type="ECO:0000255" key="1">
    <source>
        <dbReference type="HAMAP-Rule" id="MF_00309"/>
    </source>
</evidence>
<keyword id="KW-0066">ATP synthesis</keyword>
<keyword id="KW-0067">ATP-binding</keyword>
<keyword id="KW-0375">Hydrogen ion transport</keyword>
<keyword id="KW-0406">Ion transport</keyword>
<keyword id="KW-0547">Nucleotide-binding</keyword>
<keyword id="KW-1278">Translocase</keyword>
<keyword id="KW-0813">Transport</keyword>
<dbReference type="EC" id="7.1.2.2" evidence="1"/>
<dbReference type="EMBL" id="CP000262">
    <property type="protein sequence ID" value="ABF37086.1"/>
    <property type="molecule type" value="Genomic_DNA"/>
</dbReference>
<dbReference type="SMR" id="Q1J8S5"/>
<dbReference type="KEGG" id="spi:MGAS10750_Spy0136"/>
<dbReference type="HOGENOM" id="CLU_008162_3_1_9"/>
<dbReference type="Proteomes" id="UP000002434">
    <property type="component" value="Chromosome"/>
</dbReference>
<dbReference type="GO" id="GO:0045259">
    <property type="term" value="C:proton-transporting ATP synthase complex"/>
    <property type="evidence" value="ECO:0007669"/>
    <property type="project" value="UniProtKB-ARBA"/>
</dbReference>
<dbReference type="GO" id="GO:0005524">
    <property type="term" value="F:ATP binding"/>
    <property type="evidence" value="ECO:0007669"/>
    <property type="project" value="UniProtKB-UniRule"/>
</dbReference>
<dbReference type="GO" id="GO:0046933">
    <property type="term" value="F:proton-transporting ATP synthase activity, rotational mechanism"/>
    <property type="evidence" value="ECO:0007669"/>
    <property type="project" value="UniProtKB-UniRule"/>
</dbReference>
<dbReference type="GO" id="GO:0046961">
    <property type="term" value="F:proton-transporting ATPase activity, rotational mechanism"/>
    <property type="evidence" value="ECO:0007669"/>
    <property type="project" value="InterPro"/>
</dbReference>
<dbReference type="GO" id="GO:0042777">
    <property type="term" value="P:proton motive force-driven plasma membrane ATP synthesis"/>
    <property type="evidence" value="ECO:0007669"/>
    <property type="project" value="UniProtKB-UniRule"/>
</dbReference>
<dbReference type="CDD" id="cd18111">
    <property type="entry name" value="ATP-synt_V_A-type_alpha_C"/>
    <property type="match status" value="1"/>
</dbReference>
<dbReference type="CDD" id="cd18119">
    <property type="entry name" value="ATP-synt_V_A-type_alpha_N"/>
    <property type="match status" value="1"/>
</dbReference>
<dbReference type="CDD" id="cd01134">
    <property type="entry name" value="V_A-ATPase_A"/>
    <property type="match status" value="1"/>
</dbReference>
<dbReference type="FunFam" id="3.40.50.300:FF:000675">
    <property type="entry name" value="V-type ATP synthase alpha chain"/>
    <property type="match status" value="1"/>
</dbReference>
<dbReference type="FunFam" id="2.40.30.20:FF:000002">
    <property type="entry name" value="V-type proton ATPase catalytic subunit A"/>
    <property type="match status" value="1"/>
</dbReference>
<dbReference type="FunFam" id="2.40.50.100:FF:000008">
    <property type="entry name" value="V-type proton ATPase catalytic subunit A"/>
    <property type="match status" value="1"/>
</dbReference>
<dbReference type="Gene3D" id="2.40.30.20">
    <property type="match status" value="1"/>
</dbReference>
<dbReference type="Gene3D" id="2.40.50.100">
    <property type="match status" value="1"/>
</dbReference>
<dbReference type="Gene3D" id="1.10.1140.10">
    <property type="entry name" value="Bovine Mitochondrial F1-atpase, Atp Synthase Beta Chain, Chain D, domain 3"/>
    <property type="match status" value="1"/>
</dbReference>
<dbReference type="Gene3D" id="3.40.50.300">
    <property type="entry name" value="P-loop containing nucleotide triphosphate hydrolases"/>
    <property type="match status" value="1"/>
</dbReference>
<dbReference type="HAMAP" id="MF_00309">
    <property type="entry name" value="ATP_synth_A_arch"/>
    <property type="match status" value="1"/>
</dbReference>
<dbReference type="InterPro" id="IPR055190">
    <property type="entry name" value="ATP-synt_VA_C"/>
</dbReference>
<dbReference type="InterPro" id="IPR031686">
    <property type="entry name" value="ATP-synth_a_Xtn"/>
</dbReference>
<dbReference type="InterPro" id="IPR023366">
    <property type="entry name" value="ATP_synth_asu-like_sf"/>
</dbReference>
<dbReference type="InterPro" id="IPR020003">
    <property type="entry name" value="ATPase_a/bsu_AS"/>
</dbReference>
<dbReference type="InterPro" id="IPR004100">
    <property type="entry name" value="ATPase_F1/V1/A1_a/bsu_N"/>
</dbReference>
<dbReference type="InterPro" id="IPR036121">
    <property type="entry name" value="ATPase_F1/V1/A1_a/bsu_N_sf"/>
</dbReference>
<dbReference type="InterPro" id="IPR000194">
    <property type="entry name" value="ATPase_F1/V1/A1_a/bsu_nucl-bd"/>
</dbReference>
<dbReference type="InterPro" id="IPR024034">
    <property type="entry name" value="ATPase_F1/V1_b/a_C"/>
</dbReference>
<dbReference type="InterPro" id="IPR027417">
    <property type="entry name" value="P-loop_NTPase"/>
</dbReference>
<dbReference type="InterPro" id="IPR022878">
    <property type="entry name" value="V-ATPase_asu"/>
</dbReference>
<dbReference type="NCBIfam" id="NF003220">
    <property type="entry name" value="PRK04192.1"/>
    <property type="match status" value="1"/>
</dbReference>
<dbReference type="PANTHER" id="PTHR43607:SF1">
    <property type="entry name" value="H(+)-TRANSPORTING TWO-SECTOR ATPASE"/>
    <property type="match status" value="1"/>
</dbReference>
<dbReference type="PANTHER" id="PTHR43607">
    <property type="entry name" value="V-TYPE PROTON ATPASE CATALYTIC SUBUNIT A"/>
    <property type="match status" value="1"/>
</dbReference>
<dbReference type="Pfam" id="PF00006">
    <property type="entry name" value="ATP-synt_ab"/>
    <property type="match status" value="1"/>
</dbReference>
<dbReference type="Pfam" id="PF02874">
    <property type="entry name" value="ATP-synt_ab_N"/>
    <property type="match status" value="1"/>
</dbReference>
<dbReference type="Pfam" id="PF16886">
    <property type="entry name" value="ATP-synt_ab_Xtn"/>
    <property type="match status" value="1"/>
</dbReference>
<dbReference type="Pfam" id="PF22919">
    <property type="entry name" value="ATP-synt_VA_C"/>
    <property type="match status" value="1"/>
</dbReference>
<dbReference type="SUPFAM" id="SSF47917">
    <property type="entry name" value="C-terminal domain of alpha and beta subunits of F1 ATP synthase"/>
    <property type="match status" value="1"/>
</dbReference>
<dbReference type="SUPFAM" id="SSF50615">
    <property type="entry name" value="N-terminal domain of alpha and beta subunits of F1 ATP synthase"/>
    <property type="match status" value="1"/>
</dbReference>
<dbReference type="SUPFAM" id="SSF52540">
    <property type="entry name" value="P-loop containing nucleoside triphosphate hydrolases"/>
    <property type="match status" value="1"/>
</dbReference>
<dbReference type="PROSITE" id="PS00152">
    <property type="entry name" value="ATPASE_ALPHA_BETA"/>
    <property type="match status" value="1"/>
</dbReference>
<name>VATA_STRPF</name>
<feature type="chain" id="PRO_1000059356" description="V-type ATP synthase alpha chain">
    <location>
        <begin position="1"/>
        <end position="591"/>
    </location>
</feature>
<feature type="binding site" evidence="1">
    <location>
        <begin position="233"/>
        <end position="240"/>
    </location>
    <ligand>
        <name>ATP</name>
        <dbReference type="ChEBI" id="CHEBI:30616"/>
    </ligand>
</feature>
<protein>
    <recommendedName>
        <fullName evidence="1">V-type ATP synthase alpha chain</fullName>
        <ecNumber evidence="1">7.1.2.2</ecNumber>
    </recommendedName>
    <alternativeName>
        <fullName evidence="1">V-ATPase subunit A</fullName>
    </alternativeName>
</protein>
<reference key="1">
    <citation type="journal article" date="2006" name="Proc. Natl. Acad. Sci. U.S.A.">
        <title>Molecular genetic anatomy of inter- and intraserotype variation in the human bacterial pathogen group A Streptococcus.</title>
        <authorList>
            <person name="Beres S.B."/>
            <person name="Richter E.W."/>
            <person name="Nagiec M.J."/>
            <person name="Sumby P."/>
            <person name="Porcella S.F."/>
            <person name="DeLeo F.R."/>
            <person name="Musser J.M."/>
        </authorList>
    </citation>
    <scope>NUCLEOTIDE SEQUENCE [LARGE SCALE GENOMIC DNA]</scope>
    <source>
        <strain>MGAS10750</strain>
    </source>
</reference>
<proteinExistence type="inferred from homology"/>
<gene>
    <name evidence="1" type="primary">atpA</name>
    <name type="ordered locus">MGAS10750_Spy0136</name>
</gene>
<sequence>MNQGKIITVSGPLVVASGMQEANIQDICRVGHLGLVGEIIEMRRDQASIQVYEETSGIGPGEPVVTTGCPLSVELGPGLISEMFDGIQRPLDRFQKATDSDFLIRGVAIPSLDRKAKWAFIPKLSVGQEVVAGDILGTVQETAVIEHRIMVPYKVSGTLVAIHAGDFTVTDTVYEIKQEDGSIYQGSLMQTWPVRQSRPVAQKLIPVEPLVTGQRVIDTFFPVTKGGAAAVPGPFGAGKTVVQHQIAKFANVDIVIYVGCGERGNEMTDVLNEFPELIDPNTGQSIMERTVLIANTSNMPVAAREASIYTGITIAEYFRDMGYSVAIMADSTSRWAEALREMSGRLQEMPGDEGYPAYLGSRIAEYYERAGRVRTLGSQEREGTITAIGAVSPPGGDISEPVTQNTLRIVKVFWGLDAPLAQRRHFPAINWLTSYSLYQDDVGSYIDRKQQSNWSNKVTRAMAILQREASLEEIVRLVGLDSLSEQDRLTMAVARQIREDYLQQNAFDSVDTFTSFPKQEAMLTNILTFNEEASKALSLGAYFNEIMEGTAQVRDRIARSKFIPEENLEQIKGLTQKVTKEIHHVLAKGGI</sequence>